<organism>
    <name type="scientific">Ureaplasma parvum serovar 3 (strain ATCC 700970)</name>
    <dbReference type="NCBI Taxonomy" id="273119"/>
    <lineage>
        <taxon>Bacteria</taxon>
        <taxon>Bacillati</taxon>
        <taxon>Mycoplasmatota</taxon>
        <taxon>Mycoplasmoidales</taxon>
        <taxon>Mycoplasmoidaceae</taxon>
        <taxon>Ureaplasma</taxon>
    </lineage>
</organism>
<reference key="1">
    <citation type="journal article" date="2000" name="Nature">
        <title>The complete sequence of the mucosal pathogen Ureaplasma urealyticum.</title>
        <authorList>
            <person name="Glass J.I."/>
            <person name="Lefkowitz E.J."/>
            <person name="Glass J.S."/>
            <person name="Heiner C.R."/>
            <person name="Chen E.Y."/>
            <person name="Cassell G.H."/>
        </authorList>
    </citation>
    <scope>NUCLEOTIDE SEQUENCE [LARGE SCALE GENOMIC DNA]</scope>
    <source>
        <strain>ATCC 700970</strain>
    </source>
</reference>
<sequence length="320" mass="35448">MNDNYLILSIESSCDETSLALFENNKLIAHKISSSASIQSLHGGVVPELASRYHEQNINHLFNEILNETKINPLTITHVAYTAMPGLPGCLHVGKVFAKQLAVLINAELVPINHLHAHVFSASINQNLTFPFLGLVVSGGESCIYLVNDYDEIKVLNQTHDDAIGECYDKIARVLGWKYPGGPIIDKNYQENLATLEFIKSQPAAKDFSFSGLKTAVINYIHNAKQKKISFDPVVVASSFQKFAINEIIKKIKYYLNLYKLNHLAIGGGVSANSLLRKKIQSLDVISYIPEMIYTGDNAAMIGAYAYALIKNHKKSILIK</sequence>
<feature type="chain" id="PRO_0000303605" description="tRNA N6-adenosine threonylcarbamoyltransferase">
    <location>
        <begin position="1"/>
        <end position="320"/>
    </location>
</feature>
<feature type="binding site" evidence="1">
    <location>
        <position position="114"/>
    </location>
    <ligand>
        <name>Fe cation</name>
        <dbReference type="ChEBI" id="CHEBI:24875"/>
    </ligand>
</feature>
<feature type="binding site" evidence="1">
    <location>
        <position position="118"/>
    </location>
    <ligand>
        <name>Fe cation</name>
        <dbReference type="ChEBI" id="CHEBI:24875"/>
    </ligand>
</feature>
<feature type="binding site" evidence="1">
    <location>
        <begin position="136"/>
        <end position="140"/>
    </location>
    <ligand>
        <name>substrate</name>
    </ligand>
</feature>
<feature type="binding site" evidence="1">
    <location>
        <position position="169"/>
    </location>
    <ligand>
        <name>substrate</name>
    </ligand>
</feature>
<feature type="binding site" evidence="1">
    <location>
        <position position="182"/>
    </location>
    <ligand>
        <name>substrate</name>
    </ligand>
</feature>
<feature type="binding site" evidence="1">
    <location>
        <position position="186"/>
    </location>
    <ligand>
        <name>substrate</name>
    </ligand>
</feature>
<feature type="binding site" evidence="1">
    <location>
        <position position="273"/>
    </location>
    <ligand>
        <name>substrate</name>
    </ligand>
</feature>
<feature type="binding site" evidence="1">
    <location>
        <position position="297"/>
    </location>
    <ligand>
        <name>Fe cation</name>
        <dbReference type="ChEBI" id="CHEBI:24875"/>
    </ligand>
</feature>
<name>TSAD_UREPA</name>
<keyword id="KW-0012">Acyltransferase</keyword>
<keyword id="KW-0963">Cytoplasm</keyword>
<keyword id="KW-0408">Iron</keyword>
<keyword id="KW-0479">Metal-binding</keyword>
<keyword id="KW-1185">Reference proteome</keyword>
<keyword id="KW-0808">Transferase</keyword>
<keyword id="KW-0819">tRNA processing</keyword>
<evidence type="ECO:0000255" key="1">
    <source>
        <dbReference type="HAMAP-Rule" id="MF_01445"/>
    </source>
</evidence>
<accession>Q9PQ78</accession>
<protein>
    <recommendedName>
        <fullName evidence="1">tRNA N6-adenosine threonylcarbamoyltransferase</fullName>
        <ecNumber evidence="1">2.3.1.234</ecNumber>
    </recommendedName>
    <alternativeName>
        <fullName evidence="1">N6-L-threonylcarbamoyladenine synthase</fullName>
        <shortName evidence="1">t(6)A synthase</shortName>
    </alternativeName>
    <alternativeName>
        <fullName evidence="1">t(6)A37 threonylcarbamoyladenosine biosynthesis protein TsaD</fullName>
    </alternativeName>
    <alternativeName>
        <fullName evidence="1">tRNA threonylcarbamoyladenosine biosynthesis protein TsaD</fullName>
    </alternativeName>
</protein>
<gene>
    <name evidence="1" type="primary">tsaD</name>
    <name type="synonym">gcp</name>
    <name type="ordered locus">UU411</name>
</gene>
<comment type="function">
    <text evidence="1">Required for the formation of a threonylcarbamoyl group on adenosine at position 37 (t(6)A37) in tRNAs that read codons beginning with adenine. Is involved in the transfer of the threonylcarbamoyl moiety of threonylcarbamoyl-AMP (TC-AMP) to the N6 group of A37, together with TsaE and TsaB. TsaD likely plays a direct catalytic role in this reaction.</text>
</comment>
<comment type="catalytic activity">
    <reaction evidence="1">
        <text>L-threonylcarbamoyladenylate + adenosine(37) in tRNA = N(6)-L-threonylcarbamoyladenosine(37) in tRNA + AMP + H(+)</text>
        <dbReference type="Rhea" id="RHEA:37059"/>
        <dbReference type="Rhea" id="RHEA-COMP:10162"/>
        <dbReference type="Rhea" id="RHEA-COMP:10163"/>
        <dbReference type="ChEBI" id="CHEBI:15378"/>
        <dbReference type="ChEBI" id="CHEBI:73682"/>
        <dbReference type="ChEBI" id="CHEBI:74411"/>
        <dbReference type="ChEBI" id="CHEBI:74418"/>
        <dbReference type="ChEBI" id="CHEBI:456215"/>
        <dbReference type="EC" id="2.3.1.234"/>
    </reaction>
</comment>
<comment type="cofactor">
    <cofactor evidence="1">
        <name>Fe(2+)</name>
        <dbReference type="ChEBI" id="CHEBI:29033"/>
    </cofactor>
    <text evidence="1">Binds 1 Fe(2+) ion per subunit.</text>
</comment>
<comment type="subcellular location">
    <subcellularLocation>
        <location evidence="1">Cytoplasm</location>
    </subcellularLocation>
</comment>
<comment type="similarity">
    <text evidence="1">Belongs to the KAE1 / TsaD family.</text>
</comment>
<proteinExistence type="inferred from homology"/>
<dbReference type="EC" id="2.3.1.234" evidence="1"/>
<dbReference type="EMBL" id="AF222894">
    <property type="protein sequence ID" value="AAF30822.1"/>
    <property type="molecule type" value="Genomic_DNA"/>
</dbReference>
<dbReference type="RefSeq" id="WP_006689092.1">
    <property type="nucleotide sequence ID" value="NC_002162.1"/>
</dbReference>
<dbReference type="SMR" id="Q9PQ78"/>
<dbReference type="STRING" id="273119.UU411"/>
<dbReference type="EnsemblBacteria" id="AAF30822">
    <property type="protein sequence ID" value="AAF30822"/>
    <property type="gene ID" value="UU411"/>
</dbReference>
<dbReference type="GeneID" id="29672458"/>
<dbReference type="KEGG" id="uur:UU411"/>
<dbReference type="eggNOG" id="COG0533">
    <property type="taxonomic scope" value="Bacteria"/>
</dbReference>
<dbReference type="HOGENOM" id="CLU_023208_0_1_14"/>
<dbReference type="OrthoDB" id="9806197at2"/>
<dbReference type="Proteomes" id="UP000000423">
    <property type="component" value="Chromosome"/>
</dbReference>
<dbReference type="GO" id="GO:0005737">
    <property type="term" value="C:cytoplasm"/>
    <property type="evidence" value="ECO:0007669"/>
    <property type="project" value="UniProtKB-SubCell"/>
</dbReference>
<dbReference type="GO" id="GO:0005506">
    <property type="term" value="F:iron ion binding"/>
    <property type="evidence" value="ECO:0007669"/>
    <property type="project" value="UniProtKB-UniRule"/>
</dbReference>
<dbReference type="GO" id="GO:0061711">
    <property type="term" value="F:N(6)-L-threonylcarbamoyladenine synthase activity"/>
    <property type="evidence" value="ECO:0007669"/>
    <property type="project" value="UniProtKB-EC"/>
</dbReference>
<dbReference type="GO" id="GO:0002949">
    <property type="term" value="P:tRNA threonylcarbamoyladenosine modification"/>
    <property type="evidence" value="ECO:0007669"/>
    <property type="project" value="UniProtKB-UniRule"/>
</dbReference>
<dbReference type="Gene3D" id="3.30.420.40">
    <property type="match status" value="2"/>
</dbReference>
<dbReference type="HAMAP" id="MF_01445">
    <property type="entry name" value="TsaD"/>
    <property type="match status" value="1"/>
</dbReference>
<dbReference type="InterPro" id="IPR043129">
    <property type="entry name" value="ATPase_NBD"/>
</dbReference>
<dbReference type="InterPro" id="IPR000905">
    <property type="entry name" value="Gcp-like_dom"/>
</dbReference>
<dbReference type="InterPro" id="IPR017861">
    <property type="entry name" value="KAE1/TsaD"/>
</dbReference>
<dbReference type="InterPro" id="IPR022450">
    <property type="entry name" value="TsaD"/>
</dbReference>
<dbReference type="NCBIfam" id="TIGR00329">
    <property type="entry name" value="gcp_kae1"/>
    <property type="match status" value="1"/>
</dbReference>
<dbReference type="NCBIfam" id="TIGR03723">
    <property type="entry name" value="T6A_TsaD_YgjD"/>
    <property type="match status" value="1"/>
</dbReference>
<dbReference type="PANTHER" id="PTHR11735">
    <property type="entry name" value="TRNA N6-ADENOSINE THREONYLCARBAMOYLTRANSFERASE"/>
    <property type="match status" value="1"/>
</dbReference>
<dbReference type="PANTHER" id="PTHR11735:SF6">
    <property type="entry name" value="TRNA N6-ADENOSINE THREONYLCARBAMOYLTRANSFERASE, MITOCHONDRIAL"/>
    <property type="match status" value="1"/>
</dbReference>
<dbReference type="Pfam" id="PF00814">
    <property type="entry name" value="TsaD"/>
    <property type="match status" value="1"/>
</dbReference>
<dbReference type="PRINTS" id="PR00789">
    <property type="entry name" value="OSIALOPTASE"/>
</dbReference>
<dbReference type="SUPFAM" id="SSF53067">
    <property type="entry name" value="Actin-like ATPase domain"/>
    <property type="match status" value="2"/>
</dbReference>